<accession>C3LLK9</accession>
<organism>
    <name type="scientific">Vibrio cholerae serotype O1 (strain M66-2)</name>
    <dbReference type="NCBI Taxonomy" id="579112"/>
    <lineage>
        <taxon>Bacteria</taxon>
        <taxon>Pseudomonadati</taxon>
        <taxon>Pseudomonadota</taxon>
        <taxon>Gammaproteobacteria</taxon>
        <taxon>Vibrionales</taxon>
        <taxon>Vibrionaceae</taxon>
        <taxon>Vibrio</taxon>
    </lineage>
</organism>
<feature type="chain" id="PRO_1000185697" description="tRNA U34 carboxymethyltransferase">
    <location>
        <begin position="1"/>
        <end position="323"/>
    </location>
</feature>
<feature type="binding site" evidence="1">
    <location>
        <position position="91"/>
    </location>
    <ligand>
        <name>carboxy-S-adenosyl-L-methionine</name>
        <dbReference type="ChEBI" id="CHEBI:134278"/>
    </ligand>
</feature>
<feature type="binding site" evidence="1">
    <location>
        <position position="105"/>
    </location>
    <ligand>
        <name>carboxy-S-adenosyl-L-methionine</name>
        <dbReference type="ChEBI" id="CHEBI:134278"/>
    </ligand>
</feature>
<feature type="binding site" evidence="1">
    <location>
        <position position="110"/>
    </location>
    <ligand>
        <name>carboxy-S-adenosyl-L-methionine</name>
        <dbReference type="ChEBI" id="CHEBI:134278"/>
    </ligand>
</feature>
<feature type="binding site" evidence="1">
    <location>
        <position position="130"/>
    </location>
    <ligand>
        <name>carboxy-S-adenosyl-L-methionine</name>
        <dbReference type="ChEBI" id="CHEBI:134278"/>
    </ligand>
</feature>
<feature type="binding site" evidence="1">
    <location>
        <begin position="152"/>
        <end position="154"/>
    </location>
    <ligand>
        <name>carboxy-S-adenosyl-L-methionine</name>
        <dbReference type="ChEBI" id="CHEBI:134278"/>
    </ligand>
</feature>
<feature type="binding site" evidence="1">
    <location>
        <begin position="181"/>
        <end position="182"/>
    </location>
    <ligand>
        <name>carboxy-S-adenosyl-L-methionine</name>
        <dbReference type="ChEBI" id="CHEBI:134278"/>
    </ligand>
</feature>
<feature type="binding site" evidence="1">
    <location>
        <position position="196"/>
    </location>
    <ligand>
        <name>carboxy-S-adenosyl-L-methionine</name>
        <dbReference type="ChEBI" id="CHEBI:134278"/>
    </ligand>
</feature>
<feature type="binding site" evidence="1">
    <location>
        <position position="200"/>
    </location>
    <ligand>
        <name>carboxy-S-adenosyl-L-methionine</name>
        <dbReference type="ChEBI" id="CHEBI:134278"/>
    </ligand>
</feature>
<feature type="binding site" evidence="1">
    <location>
        <position position="315"/>
    </location>
    <ligand>
        <name>carboxy-S-adenosyl-L-methionine</name>
        <dbReference type="ChEBI" id="CHEBI:134278"/>
    </ligand>
</feature>
<name>CMOB_VIBCM</name>
<gene>
    <name evidence="1" type="primary">cmoB</name>
    <name type="ordered locus">VCM66_1118</name>
</gene>
<dbReference type="EC" id="2.5.1.-" evidence="1"/>
<dbReference type="EMBL" id="CP001233">
    <property type="protein sequence ID" value="ACP05435.1"/>
    <property type="molecule type" value="Genomic_DNA"/>
</dbReference>
<dbReference type="RefSeq" id="WP_000481534.1">
    <property type="nucleotide sequence ID" value="NC_012578.1"/>
</dbReference>
<dbReference type="SMR" id="C3LLK9"/>
<dbReference type="KEGG" id="vcm:VCM66_1118"/>
<dbReference type="HOGENOM" id="CLU_052665_0_0_6"/>
<dbReference type="Proteomes" id="UP000001217">
    <property type="component" value="Chromosome I"/>
</dbReference>
<dbReference type="GO" id="GO:0008168">
    <property type="term" value="F:methyltransferase activity"/>
    <property type="evidence" value="ECO:0007669"/>
    <property type="project" value="TreeGrafter"/>
</dbReference>
<dbReference type="GO" id="GO:0016765">
    <property type="term" value="F:transferase activity, transferring alkyl or aryl (other than methyl) groups"/>
    <property type="evidence" value="ECO:0007669"/>
    <property type="project" value="UniProtKB-UniRule"/>
</dbReference>
<dbReference type="GO" id="GO:0002098">
    <property type="term" value="P:tRNA wobble uridine modification"/>
    <property type="evidence" value="ECO:0007669"/>
    <property type="project" value="InterPro"/>
</dbReference>
<dbReference type="CDD" id="cd02440">
    <property type="entry name" value="AdoMet_MTases"/>
    <property type="match status" value="1"/>
</dbReference>
<dbReference type="Gene3D" id="3.40.50.150">
    <property type="entry name" value="Vaccinia Virus protein VP39"/>
    <property type="match status" value="1"/>
</dbReference>
<dbReference type="HAMAP" id="MF_01590">
    <property type="entry name" value="tRNA_carboxymethyltr_CmoB"/>
    <property type="match status" value="1"/>
</dbReference>
<dbReference type="InterPro" id="IPR010017">
    <property type="entry name" value="CmoB"/>
</dbReference>
<dbReference type="InterPro" id="IPR027555">
    <property type="entry name" value="Mo5U34_MeTrfas-like"/>
</dbReference>
<dbReference type="InterPro" id="IPR029063">
    <property type="entry name" value="SAM-dependent_MTases_sf"/>
</dbReference>
<dbReference type="NCBIfam" id="NF011650">
    <property type="entry name" value="PRK15068.1"/>
    <property type="match status" value="1"/>
</dbReference>
<dbReference type="NCBIfam" id="TIGR00452">
    <property type="entry name" value="tRNA 5-methoxyuridine(34)/uridine 5-oxyacetic acid(34) synthase CmoB"/>
    <property type="match status" value="1"/>
</dbReference>
<dbReference type="PANTHER" id="PTHR43464">
    <property type="entry name" value="METHYLTRANSFERASE"/>
    <property type="match status" value="1"/>
</dbReference>
<dbReference type="PANTHER" id="PTHR43464:SF95">
    <property type="entry name" value="TRNA U34 CARBOXYMETHYLTRANSFERASE"/>
    <property type="match status" value="1"/>
</dbReference>
<dbReference type="Pfam" id="PF08003">
    <property type="entry name" value="Methyltransf_9"/>
    <property type="match status" value="1"/>
</dbReference>
<dbReference type="SUPFAM" id="SSF53335">
    <property type="entry name" value="S-adenosyl-L-methionine-dependent methyltransferases"/>
    <property type="match status" value="1"/>
</dbReference>
<reference key="1">
    <citation type="journal article" date="2008" name="PLoS ONE">
        <title>A recalibrated molecular clock and independent origins for the cholera pandemic clones.</title>
        <authorList>
            <person name="Feng L."/>
            <person name="Reeves P.R."/>
            <person name="Lan R."/>
            <person name="Ren Y."/>
            <person name="Gao C."/>
            <person name="Zhou Z."/>
            <person name="Ren Y."/>
            <person name="Cheng J."/>
            <person name="Wang W."/>
            <person name="Wang J."/>
            <person name="Qian W."/>
            <person name="Li D."/>
            <person name="Wang L."/>
        </authorList>
    </citation>
    <scope>NUCLEOTIDE SEQUENCE [LARGE SCALE GENOMIC DNA]</scope>
    <source>
        <strain>M66-2</strain>
    </source>
</reference>
<sequence>MFNFANVYQQIAQHPQLQLWLNTLPQQLTDWQAKQHGDLDRWMRNLKKIPVGQPEVIDLKNAVAAHNHQPLAQGEQKKLEAVLKTFHPWRKGPYHLHGIHIDTEWRSDWKWDRLLPHISPLKNRLVLDVGCGNGYHMWRMLGEGAQQVFGIDPSELFLIQFEAVRKLLGDDQRVHLLPLGIEQMPELNAFDTVFSMGVLYHRRSPLDHLLQLKNQLVAGGELILETLVVEGDEHTVLVPFDRYAQMRNVYFFPSALALKVWLEKTGFVDVRIVDENITSLGEQRTTEWMTHNSLPDYVDPQDPSKTIEGYPAPRRAILIAKKP</sequence>
<protein>
    <recommendedName>
        <fullName evidence="1">tRNA U34 carboxymethyltransferase</fullName>
        <ecNumber evidence="1">2.5.1.-</ecNumber>
    </recommendedName>
</protein>
<comment type="function">
    <text evidence="1">Catalyzes carboxymethyl transfer from carboxy-S-adenosyl-L-methionine (Cx-SAM) to 5-hydroxyuridine (ho5U) to form 5-carboxymethoxyuridine (cmo5U) at position 34 in tRNAs.</text>
</comment>
<comment type="catalytic activity">
    <reaction evidence="1">
        <text>carboxy-S-adenosyl-L-methionine + 5-hydroxyuridine(34) in tRNA = 5-carboxymethoxyuridine(34) in tRNA + S-adenosyl-L-homocysteine + H(+)</text>
        <dbReference type="Rhea" id="RHEA:52848"/>
        <dbReference type="Rhea" id="RHEA-COMP:13381"/>
        <dbReference type="Rhea" id="RHEA-COMP:13383"/>
        <dbReference type="ChEBI" id="CHEBI:15378"/>
        <dbReference type="ChEBI" id="CHEBI:57856"/>
        <dbReference type="ChEBI" id="CHEBI:134278"/>
        <dbReference type="ChEBI" id="CHEBI:136877"/>
        <dbReference type="ChEBI" id="CHEBI:136879"/>
    </reaction>
</comment>
<comment type="subunit">
    <text evidence="1">Homotetramer.</text>
</comment>
<comment type="similarity">
    <text evidence="1">Belongs to the class I-like SAM-binding methyltransferase superfamily. CmoB family.</text>
</comment>
<proteinExistence type="inferred from homology"/>
<evidence type="ECO:0000255" key="1">
    <source>
        <dbReference type="HAMAP-Rule" id="MF_01590"/>
    </source>
</evidence>
<keyword id="KW-0808">Transferase</keyword>
<keyword id="KW-0819">tRNA processing</keyword>